<keyword id="KW-0067">ATP-binding</keyword>
<keyword id="KW-0460">Magnesium</keyword>
<keyword id="KW-0479">Metal-binding</keyword>
<keyword id="KW-0547">Nucleotide-binding</keyword>
<keyword id="KW-0548">Nucleotidyltransferase</keyword>
<keyword id="KW-0692">RNA repair</keyword>
<keyword id="KW-0694">RNA-binding</keyword>
<keyword id="KW-0808">Transferase</keyword>
<keyword id="KW-0819">tRNA processing</keyword>
<reference key="1">
    <citation type="journal article" date="2001" name="Science">
        <title>Comparative genomics of Listeria species.</title>
        <authorList>
            <person name="Glaser P."/>
            <person name="Frangeul L."/>
            <person name="Buchrieser C."/>
            <person name="Rusniok C."/>
            <person name="Amend A."/>
            <person name="Baquero F."/>
            <person name="Berche P."/>
            <person name="Bloecker H."/>
            <person name="Brandt P."/>
            <person name="Chakraborty T."/>
            <person name="Charbit A."/>
            <person name="Chetouani F."/>
            <person name="Couve E."/>
            <person name="de Daruvar A."/>
            <person name="Dehoux P."/>
            <person name="Domann E."/>
            <person name="Dominguez-Bernal G."/>
            <person name="Duchaud E."/>
            <person name="Durant L."/>
            <person name="Dussurget O."/>
            <person name="Entian K.-D."/>
            <person name="Fsihi H."/>
            <person name="Garcia-del Portillo F."/>
            <person name="Garrido P."/>
            <person name="Gautier L."/>
            <person name="Goebel W."/>
            <person name="Gomez-Lopez N."/>
            <person name="Hain T."/>
            <person name="Hauf J."/>
            <person name="Jackson D."/>
            <person name="Jones L.-M."/>
            <person name="Kaerst U."/>
            <person name="Kreft J."/>
            <person name="Kuhn M."/>
            <person name="Kunst F."/>
            <person name="Kurapkat G."/>
            <person name="Madueno E."/>
            <person name="Maitournam A."/>
            <person name="Mata Vicente J."/>
            <person name="Ng E."/>
            <person name="Nedjari H."/>
            <person name="Nordsiek G."/>
            <person name="Novella S."/>
            <person name="de Pablos B."/>
            <person name="Perez-Diaz J.-C."/>
            <person name="Purcell R."/>
            <person name="Remmel B."/>
            <person name="Rose M."/>
            <person name="Schlueter T."/>
            <person name="Simoes N."/>
            <person name="Tierrez A."/>
            <person name="Vazquez-Boland J.-A."/>
            <person name="Voss H."/>
            <person name="Wehland J."/>
            <person name="Cossart P."/>
        </authorList>
    </citation>
    <scope>NUCLEOTIDE SEQUENCE [LARGE SCALE GENOMIC DNA]</scope>
    <source>
        <strain>ATCC BAA-680 / CLIP 11262</strain>
    </source>
</reference>
<proteinExistence type="inferred from homology"/>
<accession>Q92AA3</accession>
<comment type="function">
    <text evidence="1">Catalyzes the addition and repair of the essential 3'-terminal CCA sequence in tRNAs without using a nucleic acid template. Adds these three nucleotides in the order of C, C, and A to the tRNA nucleotide-73, using CTP and ATP as substrates and producing inorganic pyrophosphate. tRNA 3'-terminal CCA addition is required both for tRNA processing and repair. Also involved in tRNA surveillance by mediating tandem CCA addition to generate a CCACCA at the 3' terminus of unstable tRNAs. While stable tRNAs receive only 3'-terminal CCA, unstable tRNAs are marked with CCACCA and rapidly degraded.</text>
</comment>
<comment type="catalytic activity">
    <reaction evidence="1">
        <text>a tRNA precursor + 2 CTP + ATP = a tRNA with a 3' CCA end + 3 diphosphate</text>
        <dbReference type="Rhea" id="RHEA:14433"/>
        <dbReference type="Rhea" id="RHEA-COMP:10465"/>
        <dbReference type="Rhea" id="RHEA-COMP:10468"/>
        <dbReference type="ChEBI" id="CHEBI:30616"/>
        <dbReference type="ChEBI" id="CHEBI:33019"/>
        <dbReference type="ChEBI" id="CHEBI:37563"/>
        <dbReference type="ChEBI" id="CHEBI:74896"/>
        <dbReference type="ChEBI" id="CHEBI:83071"/>
        <dbReference type="EC" id="2.7.7.72"/>
    </reaction>
</comment>
<comment type="catalytic activity">
    <reaction evidence="1">
        <text>a tRNA with a 3' CCA end + 2 CTP + ATP = a tRNA with a 3' CCACCA end + 3 diphosphate</text>
        <dbReference type="Rhea" id="RHEA:76235"/>
        <dbReference type="Rhea" id="RHEA-COMP:10468"/>
        <dbReference type="Rhea" id="RHEA-COMP:18655"/>
        <dbReference type="ChEBI" id="CHEBI:30616"/>
        <dbReference type="ChEBI" id="CHEBI:33019"/>
        <dbReference type="ChEBI" id="CHEBI:37563"/>
        <dbReference type="ChEBI" id="CHEBI:83071"/>
        <dbReference type="ChEBI" id="CHEBI:195187"/>
    </reaction>
    <physiologicalReaction direction="left-to-right" evidence="1">
        <dbReference type="Rhea" id="RHEA:76236"/>
    </physiologicalReaction>
</comment>
<comment type="cofactor">
    <cofactor evidence="1">
        <name>Mg(2+)</name>
        <dbReference type="ChEBI" id="CHEBI:18420"/>
    </cofactor>
</comment>
<comment type="subunit">
    <text evidence="1">Homodimer.</text>
</comment>
<comment type="miscellaneous">
    <text evidence="1">A single active site specifically recognizes both ATP and CTP and is responsible for their addition.</text>
</comment>
<comment type="similarity">
    <text evidence="1">Belongs to the tRNA nucleotidyltransferase/poly(A) polymerase family. Bacterial CCA-adding enzyme type 3 subfamily.</text>
</comment>
<name>CCA_LISIN</name>
<evidence type="ECO:0000255" key="1">
    <source>
        <dbReference type="HAMAP-Rule" id="MF_01263"/>
    </source>
</evidence>
<organism>
    <name type="scientific">Listeria innocua serovar 6a (strain ATCC BAA-680 / CLIP 11262)</name>
    <dbReference type="NCBI Taxonomy" id="272626"/>
    <lineage>
        <taxon>Bacteria</taxon>
        <taxon>Bacillati</taxon>
        <taxon>Bacillota</taxon>
        <taxon>Bacilli</taxon>
        <taxon>Bacillales</taxon>
        <taxon>Listeriaceae</taxon>
        <taxon>Listeria</taxon>
    </lineage>
</organism>
<feature type="chain" id="PRO_0000139041" description="CCA-adding enzyme">
    <location>
        <begin position="1"/>
        <end position="393"/>
    </location>
</feature>
<feature type="binding site" evidence="1">
    <location>
        <position position="27"/>
    </location>
    <ligand>
        <name>ATP</name>
        <dbReference type="ChEBI" id="CHEBI:30616"/>
    </ligand>
</feature>
<feature type="binding site" evidence="1">
    <location>
        <position position="27"/>
    </location>
    <ligand>
        <name>CTP</name>
        <dbReference type="ChEBI" id="CHEBI:37563"/>
    </ligand>
</feature>
<feature type="binding site" evidence="1">
    <location>
        <position position="30"/>
    </location>
    <ligand>
        <name>ATP</name>
        <dbReference type="ChEBI" id="CHEBI:30616"/>
    </ligand>
</feature>
<feature type="binding site" evidence="1">
    <location>
        <position position="30"/>
    </location>
    <ligand>
        <name>CTP</name>
        <dbReference type="ChEBI" id="CHEBI:37563"/>
    </ligand>
</feature>
<feature type="binding site" evidence="1">
    <location>
        <position position="40"/>
    </location>
    <ligand>
        <name>Mg(2+)</name>
        <dbReference type="ChEBI" id="CHEBI:18420"/>
    </ligand>
</feature>
<feature type="binding site" evidence="1">
    <location>
        <position position="42"/>
    </location>
    <ligand>
        <name>Mg(2+)</name>
        <dbReference type="ChEBI" id="CHEBI:18420"/>
    </ligand>
</feature>
<feature type="binding site" evidence="1">
    <location>
        <position position="111"/>
    </location>
    <ligand>
        <name>ATP</name>
        <dbReference type="ChEBI" id="CHEBI:30616"/>
    </ligand>
</feature>
<feature type="binding site" evidence="1">
    <location>
        <position position="111"/>
    </location>
    <ligand>
        <name>CTP</name>
        <dbReference type="ChEBI" id="CHEBI:37563"/>
    </ligand>
</feature>
<feature type="binding site" evidence="1">
    <location>
        <position position="154"/>
    </location>
    <ligand>
        <name>ATP</name>
        <dbReference type="ChEBI" id="CHEBI:30616"/>
    </ligand>
</feature>
<feature type="binding site" evidence="1">
    <location>
        <position position="154"/>
    </location>
    <ligand>
        <name>CTP</name>
        <dbReference type="ChEBI" id="CHEBI:37563"/>
    </ligand>
</feature>
<feature type="binding site" evidence="1">
    <location>
        <position position="157"/>
    </location>
    <ligand>
        <name>ATP</name>
        <dbReference type="ChEBI" id="CHEBI:30616"/>
    </ligand>
</feature>
<feature type="binding site" evidence="1">
    <location>
        <position position="157"/>
    </location>
    <ligand>
        <name>CTP</name>
        <dbReference type="ChEBI" id="CHEBI:37563"/>
    </ligand>
</feature>
<feature type="binding site" evidence="1">
    <location>
        <position position="160"/>
    </location>
    <ligand>
        <name>ATP</name>
        <dbReference type="ChEBI" id="CHEBI:30616"/>
    </ligand>
</feature>
<feature type="binding site" evidence="1">
    <location>
        <position position="160"/>
    </location>
    <ligand>
        <name>CTP</name>
        <dbReference type="ChEBI" id="CHEBI:37563"/>
    </ligand>
</feature>
<feature type="binding site" evidence="1">
    <location>
        <position position="163"/>
    </location>
    <ligand>
        <name>ATP</name>
        <dbReference type="ChEBI" id="CHEBI:30616"/>
    </ligand>
</feature>
<feature type="binding site" evidence="1">
    <location>
        <position position="163"/>
    </location>
    <ligand>
        <name>CTP</name>
        <dbReference type="ChEBI" id="CHEBI:37563"/>
    </ligand>
</feature>
<gene>
    <name evidence="1" type="primary">cca</name>
    <name type="ordered locus">lin2019</name>
</gene>
<sequence length="393" mass="45164">MNDVFLKALPVLQKLTTAGFEAYFVGGSVRDYLLNRPISDVDIATSAFPEEVKEIFQSTYDTGIAHGTVTVRENKECYEVTTFRTEGTYEDFRRPSEVTFIRSLEEDLLRRDFTMNAIAMDENFKLHDPFSGQLAIQNKEIKAVGKASERFHEDALRMMRAVRFLSQLDFQLDKETETALTNQIALLQHTSVERITVEWIKMIKGQAVKRAIDLLLKVEMETYLPGFKGEKSALMEFASWNWEKRTTETAIWLGLVIAVKPSNITAFLKAWKLPNKTIQLVNKAYEAALNMKETWLTEELYHAQEAVFLLVNEINNIRGQSDKEDELKKAYELLPIHSKKDLAITGADLLKWTGENAGPWVKETLDKVECQVLLGKINNEKNQIKRWLGYHEE</sequence>
<dbReference type="EC" id="2.7.7.72" evidence="1"/>
<dbReference type="EMBL" id="AL596170">
    <property type="protein sequence ID" value="CAC97249.1"/>
    <property type="molecule type" value="Genomic_DNA"/>
</dbReference>
<dbReference type="PIR" id="AI1684">
    <property type="entry name" value="AI1684"/>
</dbReference>
<dbReference type="RefSeq" id="WP_010991708.1">
    <property type="nucleotide sequence ID" value="NC_003212.1"/>
</dbReference>
<dbReference type="SMR" id="Q92AA3"/>
<dbReference type="STRING" id="272626.gene:17566377"/>
<dbReference type="GeneID" id="93235357"/>
<dbReference type="KEGG" id="lin:cca"/>
<dbReference type="eggNOG" id="COG0617">
    <property type="taxonomic scope" value="Bacteria"/>
</dbReference>
<dbReference type="HOGENOM" id="CLU_015961_3_0_9"/>
<dbReference type="OrthoDB" id="9805698at2"/>
<dbReference type="Proteomes" id="UP000002513">
    <property type="component" value="Chromosome"/>
</dbReference>
<dbReference type="GO" id="GO:0005524">
    <property type="term" value="F:ATP binding"/>
    <property type="evidence" value="ECO:0007669"/>
    <property type="project" value="UniProtKB-UniRule"/>
</dbReference>
<dbReference type="GO" id="GO:0004810">
    <property type="term" value="F:CCA tRNA nucleotidyltransferase activity"/>
    <property type="evidence" value="ECO:0007669"/>
    <property type="project" value="UniProtKB-UniRule"/>
</dbReference>
<dbReference type="GO" id="GO:0000287">
    <property type="term" value="F:magnesium ion binding"/>
    <property type="evidence" value="ECO:0007669"/>
    <property type="project" value="UniProtKB-UniRule"/>
</dbReference>
<dbReference type="GO" id="GO:0000049">
    <property type="term" value="F:tRNA binding"/>
    <property type="evidence" value="ECO:0007669"/>
    <property type="project" value="UniProtKB-UniRule"/>
</dbReference>
<dbReference type="GO" id="GO:0042245">
    <property type="term" value="P:RNA repair"/>
    <property type="evidence" value="ECO:0007669"/>
    <property type="project" value="UniProtKB-KW"/>
</dbReference>
<dbReference type="GO" id="GO:0001680">
    <property type="term" value="P:tRNA 3'-terminal CCA addition"/>
    <property type="evidence" value="ECO:0007669"/>
    <property type="project" value="UniProtKB-UniRule"/>
</dbReference>
<dbReference type="CDD" id="cd05398">
    <property type="entry name" value="NT_ClassII-CCAase"/>
    <property type="match status" value="1"/>
</dbReference>
<dbReference type="Gene3D" id="1.10.110.30">
    <property type="match status" value="1"/>
</dbReference>
<dbReference type="Gene3D" id="1.10.246.80">
    <property type="match status" value="1"/>
</dbReference>
<dbReference type="Gene3D" id="1.20.58.560">
    <property type="match status" value="1"/>
</dbReference>
<dbReference type="Gene3D" id="3.30.460.10">
    <property type="entry name" value="Beta Polymerase, domain 2"/>
    <property type="match status" value="1"/>
</dbReference>
<dbReference type="HAMAP" id="MF_01263">
    <property type="entry name" value="CCA_bact_type3"/>
    <property type="match status" value="1"/>
</dbReference>
<dbReference type="InterPro" id="IPR050264">
    <property type="entry name" value="Bact_CCA-adding_enz_type3_sf"/>
</dbReference>
<dbReference type="InterPro" id="IPR032810">
    <property type="entry name" value="CCA-adding_enz_C"/>
</dbReference>
<dbReference type="InterPro" id="IPR023068">
    <property type="entry name" value="CCA-adding_enz_firmicutes"/>
</dbReference>
<dbReference type="InterPro" id="IPR043519">
    <property type="entry name" value="NT_sf"/>
</dbReference>
<dbReference type="InterPro" id="IPR002646">
    <property type="entry name" value="PolA_pol_head_dom"/>
</dbReference>
<dbReference type="InterPro" id="IPR032828">
    <property type="entry name" value="PolyA_RNA-bd"/>
</dbReference>
<dbReference type="NCBIfam" id="NF009814">
    <property type="entry name" value="PRK13299.1"/>
    <property type="match status" value="1"/>
</dbReference>
<dbReference type="PANTHER" id="PTHR46173">
    <property type="entry name" value="CCA TRNA NUCLEOTIDYLTRANSFERASE 1, MITOCHONDRIAL"/>
    <property type="match status" value="1"/>
</dbReference>
<dbReference type="PANTHER" id="PTHR46173:SF1">
    <property type="entry name" value="CCA TRNA NUCLEOTIDYLTRANSFERASE 1, MITOCHONDRIAL"/>
    <property type="match status" value="1"/>
</dbReference>
<dbReference type="Pfam" id="PF01743">
    <property type="entry name" value="PolyA_pol"/>
    <property type="match status" value="1"/>
</dbReference>
<dbReference type="Pfam" id="PF12627">
    <property type="entry name" value="PolyA_pol_RNAbd"/>
    <property type="match status" value="1"/>
</dbReference>
<dbReference type="Pfam" id="PF13735">
    <property type="entry name" value="tRNA_NucTran2_2"/>
    <property type="match status" value="1"/>
</dbReference>
<dbReference type="SUPFAM" id="SSF81301">
    <property type="entry name" value="Nucleotidyltransferase"/>
    <property type="match status" value="1"/>
</dbReference>
<dbReference type="SUPFAM" id="SSF81891">
    <property type="entry name" value="Poly A polymerase C-terminal region-like"/>
    <property type="match status" value="1"/>
</dbReference>
<protein>
    <recommendedName>
        <fullName evidence="1">CCA-adding enzyme</fullName>
        <ecNumber evidence="1">2.7.7.72</ecNumber>
    </recommendedName>
    <alternativeName>
        <fullName evidence="1">CCA tRNA nucleotidyltransferase</fullName>
    </alternativeName>
    <alternativeName>
        <fullName evidence="1">tRNA CCA-pyrophosphorylase</fullName>
    </alternativeName>
    <alternativeName>
        <fullName evidence="1">tRNA adenylyl-/cytidylyl- transferase</fullName>
    </alternativeName>
    <alternativeName>
        <fullName evidence="1">tRNA nucleotidyltransferase</fullName>
    </alternativeName>
    <alternativeName>
        <fullName evidence="1">tRNA-NT</fullName>
    </alternativeName>
</protein>